<dbReference type="EMBL" id="CP000255">
    <property type="protein sequence ID" value="ABD21072.1"/>
    <property type="molecule type" value="Genomic_DNA"/>
</dbReference>
<dbReference type="RefSeq" id="WP_000088431.1">
    <property type="nucleotide sequence ID" value="NZ_CP027476.1"/>
</dbReference>
<dbReference type="SMR" id="Q2FI23"/>
<dbReference type="KEGG" id="saa:SAUSA300_0957"/>
<dbReference type="HOGENOM" id="CLU_1685497_0_0_9"/>
<dbReference type="OMA" id="GACYIVA"/>
<dbReference type="Proteomes" id="UP000001939">
    <property type="component" value="Chromosome"/>
</dbReference>
<dbReference type="InterPro" id="IPR024469">
    <property type="entry name" value="DUF2538"/>
</dbReference>
<dbReference type="Pfam" id="PF10804">
    <property type="entry name" value="DUF2538"/>
    <property type="match status" value="1"/>
</dbReference>
<protein>
    <recommendedName>
        <fullName>Uncharacterized protein SAUSA300_0957</fullName>
    </recommendedName>
</protein>
<name>Y957_STAA3</name>
<reference key="1">
    <citation type="journal article" date="2006" name="Lancet">
        <title>Complete genome sequence of USA300, an epidemic clone of community-acquired meticillin-resistant Staphylococcus aureus.</title>
        <authorList>
            <person name="Diep B.A."/>
            <person name="Gill S.R."/>
            <person name="Chang R.F."/>
            <person name="Phan T.H."/>
            <person name="Chen J.H."/>
            <person name="Davidson M.G."/>
            <person name="Lin F."/>
            <person name="Lin J."/>
            <person name="Carleton H.A."/>
            <person name="Mongodin E.F."/>
            <person name="Sensabaugh G.F."/>
            <person name="Perdreau-Remington F."/>
        </authorList>
    </citation>
    <scope>NUCLEOTIDE SEQUENCE [LARGE SCALE GENOMIC DNA]</scope>
    <source>
        <strain>USA300</strain>
    </source>
</reference>
<accession>Q2FI23</accession>
<sequence>MSRKTYEKIANINGMFNMLEQQIIHSQDMAHFRSEFFYVNHEHRENYEALLIYYKNSIDNPIVDGACYILALPEIFNSVDVFESELPFSWVYDENGITETMKSLSIPLQYLVAAALEVTDVNIFKPSGFTMGMNNWNIAQMRIFWQYTAIIRKEAL</sequence>
<proteinExistence type="predicted"/>
<organism>
    <name type="scientific">Staphylococcus aureus (strain USA300)</name>
    <dbReference type="NCBI Taxonomy" id="367830"/>
    <lineage>
        <taxon>Bacteria</taxon>
        <taxon>Bacillati</taxon>
        <taxon>Bacillota</taxon>
        <taxon>Bacilli</taxon>
        <taxon>Bacillales</taxon>
        <taxon>Staphylococcaceae</taxon>
        <taxon>Staphylococcus</taxon>
    </lineage>
</organism>
<gene>
    <name type="ordered locus">SAUSA300_0957</name>
</gene>
<feature type="chain" id="PRO_0000286948" description="Uncharacterized protein SAUSA300_0957">
    <location>
        <begin position="1"/>
        <end position="156"/>
    </location>
</feature>